<gene>
    <name type="ORF">IIV6-313L</name>
</gene>
<organismHost>
    <name type="scientific">Acheta domesticus</name>
    <name type="common">House cricket</name>
    <dbReference type="NCBI Taxonomy" id="6997"/>
</organismHost>
<organismHost>
    <name type="scientific">Chilo suppressalis</name>
    <name type="common">Asiatic rice borer moth</name>
    <dbReference type="NCBI Taxonomy" id="168631"/>
</organismHost>
<organismHost>
    <name type="scientific">Gryllus bimaculatus</name>
    <name type="common">Two-spotted cricket</name>
    <dbReference type="NCBI Taxonomy" id="6999"/>
</organismHost>
<organismHost>
    <name type="scientific">Gryllus campestris</name>
    <dbReference type="NCBI Taxonomy" id="58607"/>
</organismHost>
<organismHost>
    <name type="scientific">Spodoptera frugiperda</name>
    <name type="common">Fall armyworm</name>
    <dbReference type="NCBI Taxonomy" id="7108"/>
</organismHost>
<proteinExistence type="inferred from homology"/>
<feature type="chain" id="PRO_0000377855" description="Putative KilA-N domain-containing protein 313L">
    <location>
        <begin position="1"/>
        <end position="358"/>
    </location>
</feature>
<feature type="domain" description="KilA-N" evidence="2">
    <location>
        <begin position="15"/>
        <end position="124"/>
    </location>
</feature>
<feature type="coiled-coil region" evidence="1">
    <location>
        <begin position="126"/>
        <end position="245"/>
    </location>
</feature>
<accession>Q91FL1</accession>
<protein>
    <recommendedName>
        <fullName>Putative KilA-N domain-containing protein 313L</fullName>
    </recommendedName>
</protein>
<keyword id="KW-0175">Coiled coil</keyword>
<keyword id="KW-1185">Reference proteome</keyword>
<organism>
    <name type="scientific">Invertebrate iridescent virus 6</name>
    <name type="common">IIV-6</name>
    <name type="synonym">Chilo iridescent virus</name>
    <dbReference type="NCBI Taxonomy" id="176652"/>
    <lineage>
        <taxon>Viruses</taxon>
        <taxon>Varidnaviria</taxon>
        <taxon>Bamfordvirae</taxon>
        <taxon>Nucleocytoviricota</taxon>
        <taxon>Megaviricetes</taxon>
        <taxon>Pimascovirales</taxon>
        <taxon>Iridoviridae</taxon>
        <taxon>Betairidovirinae</taxon>
        <taxon>Iridovirus</taxon>
    </lineage>
</organism>
<reference key="1">
    <citation type="journal article" date="2001" name="Virology">
        <title>Analysis of the first complete DNA sequence of an invertebrate iridovirus: coding strategy of the genome of Chilo iridescent virus.</title>
        <authorList>
            <person name="Jakob N.J."/>
            <person name="Mueller K."/>
            <person name="Bahr U."/>
            <person name="Darai G."/>
        </authorList>
    </citation>
    <scope>NUCLEOTIDE SEQUENCE [LARGE SCALE GENOMIC DNA]</scope>
</reference>
<reference key="2">
    <citation type="journal article" date="2007" name="Virol. J.">
        <title>Comparative genomic analysis of the family Iridoviridae: re-annotating and defining the core set of iridovirus genes.</title>
        <authorList>
            <person name="Eaton H.E."/>
            <person name="Metcalf J."/>
            <person name="Penny E."/>
            <person name="Tcherepanov V."/>
            <person name="Upton C."/>
            <person name="Brunetti C.R."/>
        </authorList>
    </citation>
    <scope>GENOME REANNOTATION</scope>
</reference>
<comment type="similarity">
    <text evidence="3">Belongs to the IIV-6 006L/238R/313L/468L family.</text>
</comment>
<dbReference type="EMBL" id="AF303741">
    <property type="protein sequence ID" value="AAK82174.1"/>
    <property type="molecule type" value="Genomic_DNA"/>
</dbReference>
<dbReference type="RefSeq" id="NP_149776.1">
    <property type="nucleotide sequence ID" value="NC_003038.1"/>
</dbReference>
<dbReference type="SMR" id="Q91FL1"/>
<dbReference type="KEGG" id="vg:1733195"/>
<dbReference type="OrthoDB" id="13159at10239"/>
<dbReference type="Proteomes" id="UP000001359">
    <property type="component" value="Genome"/>
</dbReference>
<dbReference type="InterPro" id="IPR022549">
    <property type="entry name" value="DUF3627"/>
</dbReference>
<dbReference type="InterPro" id="IPR018004">
    <property type="entry name" value="KilA/APSES_HTH"/>
</dbReference>
<dbReference type="InterPro" id="IPR017880">
    <property type="entry name" value="KilA_N"/>
</dbReference>
<dbReference type="Pfam" id="PF12299">
    <property type="entry name" value="DUF3627"/>
    <property type="match status" value="1"/>
</dbReference>
<dbReference type="Pfam" id="PF04383">
    <property type="entry name" value="KilA-N"/>
    <property type="match status" value="1"/>
</dbReference>
<dbReference type="PROSITE" id="PS51301">
    <property type="entry name" value="KILA_N"/>
    <property type="match status" value="1"/>
</dbReference>
<evidence type="ECO:0000255" key="1"/>
<evidence type="ECO:0000255" key="2">
    <source>
        <dbReference type="PROSITE-ProRule" id="PRU00631"/>
    </source>
</evidence>
<evidence type="ECO:0000305" key="3"/>
<name>313L_IIV6</name>
<sequence>MASLNDVCYEKIKNNFYYGLFGDFKLVVDKNTECFNATKLCNSGGKRFRDWTKLEKSKKLMEYYKGRRDDHRGGSNFYEVKGDNKDDEVSKTTGQYVKKELILDIASWISTEFYDKCNQIVIDFFVVEFKEKEKELTHQLSIVEENLKKLRIENENNLEEIKLKDTRIDELIYASKRQEQMLLESHNLLKSMGIEVKDIKEQNNELLNEVGELREDNNELQEQVENVQEQIQKVQVKLEISVEDRAPQPDKRGKKERFILLKRNDEHYPYYTIRAQDINAKKAVKRQQGKYEEVLILLDLVCHPNTKTFYVRIKDDLKKKGVKFNLCEIDISKSVITEKDLIEEMERINEEKRTLIIE</sequence>